<organism>
    <name type="scientific">Edwardsiella piscicida</name>
    <dbReference type="NCBI Taxonomy" id="1263550"/>
    <lineage>
        <taxon>Bacteria</taxon>
        <taxon>Pseudomonadati</taxon>
        <taxon>Pseudomonadota</taxon>
        <taxon>Gammaproteobacteria</taxon>
        <taxon>Enterobacterales</taxon>
        <taxon>Hafniaceae</taxon>
        <taxon>Edwardsiella</taxon>
    </lineage>
</organism>
<evidence type="ECO:0000255" key="1">
    <source>
        <dbReference type="HAMAP-Rule" id="MF_01878"/>
    </source>
</evidence>
<feature type="chain" id="PRO_0000395175" description="Dipeptide and tripeptide permease A">
    <location>
        <begin position="1"/>
        <end position="490"/>
    </location>
</feature>
<feature type="topological domain" description="Cytoplasmic" evidence="1">
    <location>
        <begin position="1"/>
        <end position="34"/>
    </location>
</feature>
<feature type="transmembrane region" description="Helical" evidence="1">
    <location>
        <begin position="35"/>
        <end position="55"/>
    </location>
</feature>
<feature type="topological domain" description="Periplasmic" evidence="1">
    <location>
        <begin position="56"/>
        <end position="59"/>
    </location>
</feature>
<feature type="transmembrane region" description="Helical" evidence="1">
    <location>
        <begin position="60"/>
        <end position="80"/>
    </location>
</feature>
<feature type="topological domain" description="Cytoplasmic" evidence="1">
    <location>
        <begin position="81"/>
        <end position="89"/>
    </location>
</feature>
<feature type="transmembrane region" description="Helical" evidence="1">
    <location>
        <begin position="90"/>
        <end position="110"/>
    </location>
</feature>
<feature type="topological domain" description="Periplasmic" evidence="1">
    <location>
        <position position="111"/>
    </location>
</feature>
<feature type="transmembrane region" description="Helical" evidence="1">
    <location>
        <begin position="112"/>
        <end position="132"/>
    </location>
</feature>
<feature type="topological domain" description="Cytoplasmic" evidence="1">
    <location>
        <begin position="133"/>
        <end position="153"/>
    </location>
</feature>
<feature type="transmembrane region" description="Helical" evidence="1">
    <location>
        <begin position="154"/>
        <end position="174"/>
    </location>
</feature>
<feature type="topological domain" description="Periplasmic" evidence="1">
    <location>
        <begin position="175"/>
        <end position="176"/>
    </location>
</feature>
<feature type="transmembrane region" description="Helical" evidence="1">
    <location>
        <begin position="177"/>
        <end position="197"/>
    </location>
</feature>
<feature type="topological domain" description="Cytoplasmic" evidence="1">
    <location>
        <begin position="198"/>
        <end position="217"/>
    </location>
</feature>
<feature type="transmembrane region" description="Helical" evidence="1">
    <location>
        <begin position="218"/>
        <end position="238"/>
    </location>
</feature>
<feature type="topological domain" description="Periplasmic" evidence="1">
    <location>
        <begin position="239"/>
        <end position="246"/>
    </location>
</feature>
<feature type="transmembrane region" description="Helical" evidence="1">
    <location>
        <begin position="247"/>
        <end position="267"/>
    </location>
</feature>
<feature type="topological domain" description="Cytoplasmic" evidence="1">
    <location>
        <begin position="268"/>
        <end position="274"/>
    </location>
</feature>
<feature type="transmembrane region" description="Helical" evidence="1">
    <location>
        <begin position="275"/>
        <end position="295"/>
    </location>
</feature>
<feature type="topological domain" description="Periplasmic" evidence="1">
    <location>
        <begin position="296"/>
        <end position="320"/>
    </location>
</feature>
<feature type="transmembrane region" description="Helical" evidence="1">
    <location>
        <begin position="321"/>
        <end position="341"/>
    </location>
</feature>
<feature type="topological domain" description="Cytoplasmic" evidence="1">
    <location>
        <begin position="342"/>
        <end position="352"/>
    </location>
</feature>
<feature type="transmembrane region" description="Helical" evidence="1">
    <location>
        <begin position="353"/>
        <end position="373"/>
    </location>
</feature>
<feature type="topological domain" description="Periplasmic" evidence="1">
    <location>
        <begin position="374"/>
        <end position="383"/>
    </location>
</feature>
<feature type="transmembrane region" description="Helical" evidence="1">
    <location>
        <begin position="384"/>
        <end position="404"/>
    </location>
</feature>
<feature type="topological domain" description="Cytoplasmic" evidence="1">
    <location>
        <begin position="405"/>
        <end position="414"/>
    </location>
</feature>
<feature type="transmembrane region" description="Helical" evidence="1">
    <location>
        <begin position="415"/>
        <end position="435"/>
    </location>
</feature>
<feature type="topological domain" description="Periplasmic" evidence="1">
    <location>
        <begin position="436"/>
        <end position="460"/>
    </location>
</feature>
<feature type="transmembrane region" description="Helical" evidence="1">
    <location>
        <begin position="461"/>
        <end position="481"/>
    </location>
</feature>
<feature type="topological domain" description="Cytoplasmic" evidence="1">
    <location>
        <begin position="482"/>
        <end position="490"/>
    </location>
</feature>
<sequence>MSNANNNQPENVSLNAFKQPRAFYLIFSIELWERFGYYGLQGIMAVYLVKMLGMTEADSITLFSSFSALVYGFVAIGGWLGDKVLGAKRVIMLGALVLAIGYAFVAYSGHDLSLVYVGMATIAVGNGLFKANPSSLLSTCYEKNDPRLDGAFTMYYMSVNIGSFFSMLATPWLAARFGWSVAFSLSVVGMLITLVNFMMCRRWVKDQGSKPDFAPLQVGKLMMTLVGVVILVAISTWLLHNQTIARWALAIISAGIILIFAKETFALQGGARRKMIVAFLLMLEAVVFFVLYSQMPTSLNFFAIHNVEHSIFGIAFEPEQYQALNPFWIMVASPILAAIYNKMGDRLPMPHKFAIGMVLCSGAFLVLPWGASFANEAGIVSVNWLILSYALQSIGELMISGLGLAMVAQLVPQRLMGFIMGSWFLTTAAAALIAGKVAALTAVPGGEVADPHASLAIYSHVFMQIGLATAVIAVLMLLTAPKLNRMTLGD</sequence>
<keyword id="KW-0997">Cell inner membrane</keyword>
<keyword id="KW-1003">Cell membrane</keyword>
<keyword id="KW-0472">Membrane</keyword>
<keyword id="KW-0571">Peptide transport</keyword>
<keyword id="KW-0653">Protein transport</keyword>
<keyword id="KW-1185">Reference proteome</keyword>
<keyword id="KW-0812">Transmembrane</keyword>
<keyword id="KW-1133">Transmembrane helix</keyword>
<keyword id="KW-0813">Transport</keyword>
<proteinExistence type="inferred from homology"/>
<reference key="1">
    <citation type="journal article" date="2009" name="PLoS ONE">
        <title>Genome sequence of the versatile fish pathogen Edwardsiella tarda provides insights into its adaptation to broad host ranges and intracellular niches.</title>
        <authorList>
            <person name="Wang Q."/>
            <person name="Yang M."/>
            <person name="Xiao J."/>
            <person name="Wu H."/>
            <person name="Wang X."/>
            <person name="Lv Y."/>
            <person name="Xu L."/>
            <person name="Zheng H."/>
            <person name="Wang S."/>
            <person name="Zhao G."/>
            <person name="Liu Q."/>
            <person name="Zhang Y."/>
        </authorList>
    </citation>
    <scope>NUCLEOTIDE SEQUENCE [LARGE SCALE GENOMIC DNA]</scope>
    <source>
        <strain>EIB202 / CCTCC M208068</strain>
    </source>
</reference>
<name>DTPA_EDWPI</name>
<comment type="function">
    <text evidence="1">Proton-dependent permease that transports di- and tripeptides.</text>
</comment>
<comment type="subcellular location">
    <subcellularLocation>
        <location evidence="1">Cell inner membrane</location>
        <topology evidence="1">Multi-pass membrane protein</topology>
    </subcellularLocation>
</comment>
<comment type="similarity">
    <text evidence="1">Belongs to the major facilitator superfamily. Proton-dependent oligopeptide transporter (POT/PTR) (TC 2.A.17) family. DtpA subfamily.</text>
</comment>
<protein>
    <recommendedName>
        <fullName evidence="1">Dipeptide and tripeptide permease A</fullName>
    </recommendedName>
</protein>
<dbReference type="EMBL" id="CP001135">
    <property type="protein sequence ID" value="ACY84531.1"/>
    <property type="molecule type" value="Genomic_DNA"/>
</dbReference>
<dbReference type="RefSeq" id="WP_012848534.1">
    <property type="nucleotide sequence ID" value="NZ_MPNU01000001.1"/>
</dbReference>
<dbReference type="SMR" id="D0Z7W2"/>
<dbReference type="GeneID" id="72528547"/>
<dbReference type="KEGG" id="etr:ETAE_1692"/>
<dbReference type="HOGENOM" id="CLU_004790_0_0_6"/>
<dbReference type="OrthoDB" id="9772725at2"/>
<dbReference type="Proteomes" id="UP000002634">
    <property type="component" value="Chromosome"/>
</dbReference>
<dbReference type="GO" id="GO:0005886">
    <property type="term" value="C:plasma membrane"/>
    <property type="evidence" value="ECO:0007669"/>
    <property type="project" value="UniProtKB-SubCell"/>
</dbReference>
<dbReference type="GO" id="GO:0071916">
    <property type="term" value="F:dipeptide transmembrane transporter activity"/>
    <property type="evidence" value="ECO:0007669"/>
    <property type="project" value="UniProtKB-UniRule"/>
</dbReference>
<dbReference type="GO" id="GO:0015333">
    <property type="term" value="F:peptide:proton symporter activity"/>
    <property type="evidence" value="ECO:0007669"/>
    <property type="project" value="UniProtKB-UniRule"/>
</dbReference>
<dbReference type="GO" id="GO:0042937">
    <property type="term" value="F:tripeptide transmembrane transporter activity"/>
    <property type="evidence" value="ECO:0007669"/>
    <property type="project" value="UniProtKB-UniRule"/>
</dbReference>
<dbReference type="GO" id="GO:0015031">
    <property type="term" value="P:protein transport"/>
    <property type="evidence" value="ECO:0007669"/>
    <property type="project" value="UniProtKB-KW"/>
</dbReference>
<dbReference type="CDD" id="cd17346">
    <property type="entry name" value="MFS_DtpA_like"/>
    <property type="match status" value="1"/>
</dbReference>
<dbReference type="FunFam" id="1.20.1250.20:FF:000017">
    <property type="entry name" value="Dipeptide and tripeptide permease A"/>
    <property type="match status" value="1"/>
</dbReference>
<dbReference type="Gene3D" id="1.20.1250.20">
    <property type="entry name" value="MFS general substrate transporter like domains"/>
    <property type="match status" value="1"/>
</dbReference>
<dbReference type="HAMAP" id="MF_01878">
    <property type="entry name" value="PTR2_DtpA_subfam"/>
    <property type="match status" value="1"/>
</dbReference>
<dbReference type="InterPro" id="IPR023517">
    <property type="entry name" value="AA/pep_transptr_DtpA"/>
</dbReference>
<dbReference type="InterPro" id="IPR005279">
    <property type="entry name" value="Dipep/tripep_permease"/>
</dbReference>
<dbReference type="InterPro" id="IPR020846">
    <property type="entry name" value="MFS_dom"/>
</dbReference>
<dbReference type="InterPro" id="IPR036259">
    <property type="entry name" value="MFS_trans_sf"/>
</dbReference>
<dbReference type="InterPro" id="IPR050171">
    <property type="entry name" value="MFS_Transporters"/>
</dbReference>
<dbReference type="InterPro" id="IPR000109">
    <property type="entry name" value="POT_fam"/>
</dbReference>
<dbReference type="InterPro" id="IPR018456">
    <property type="entry name" value="PTR2_symporter_CS"/>
</dbReference>
<dbReference type="NCBIfam" id="NF007137">
    <property type="entry name" value="PRK09584.1"/>
    <property type="match status" value="1"/>
</dbReference>
<dbReference type="NCBIfam" id="TIGR00924">
    <property type="entry name" value="yjdL_sub1_fam"/>
    <property type="match status" value="1"/>
</dbReference>
<dbReference type="PANTHER" id="PTHR23517:SF15">
    <property type="entry name" value="PROTON-DEPENDENT OLIGOPEPTIDE FAMILY TRANSPORT PROTEIN"/>
    <property type="match status" value="1"/>
</dbReference>
<dbReference type="PANTHER" id="PTHR23517">
    <property type="entry name" value="RESISTANCE PROTEIN MDTM, PUTATIVE-RELATED-RELATED"/>
    <property type="match status" value="1"/>
</dbReference>
<dbReference type="Pfam" id="PF00854">
    <property type="entry name" value="PTR2"/>
    <property type="match status" value="1"/>
</dbReference>
<dbReference type="SUPFAM" id="SSF103473">
    <property type="entry name" value="MFS general substrate transporter"/>
    <property type="match status" value="1"/>
</dbReference>
<dbReference type="PROSITE" id="PS50850">
    <property type="entry name" value="MFS"/>
    <property type="match status" value="1"/>
</dbReference>
<dbReference type="PROSITE" id="PS01022">
    <property type="entry name" value="PTR2_1"/>
    <property type="match status" value="1"/>
</dbReference>
<dbReference type="PROSITE" id="PS01023">
    <property type="entry name" value="PTR2_2"/>
    <property type="match status" value="1"/>
</dbReference>
<gene>
    <name evidence="1" type="primary">dtpA</name>
    <name type="ordered locus">ETAE_1692</name>
</gene>
<accession>D0Z7W2</accession>